<reference key="1">
    <citation type="journal article" date="2004" name="Nat. Genet.">
        <title>Complete sequencing and characterization of 21,243 full-length human cDNAs.</title>
        <authorList>
            <person name="Ota T."/>
            <person name="Suzuki Y."/>
            <person name="Nishikawa T."/>
            <person name="Otsuki T."/>
            <person name="Sugiyama T."/>
            <person name="Irie R."/>
            <person name="Wakamatsu A."/>
            <person name="Hayashi K."/>
            <person name="Sato H."/>
            <person name="Nagai K."/>
            <person name="Kimura K."/>
            <person name="Makita H."/>
            <person name="Sekine M."/>
            <person name="Obayashi M."/>
            <person name="Nishi T."/>
            <person name="Shibahara T."/>
            <person name="Tanaka T."/>
            <person name="Ishii S."/>
            <person name="Yamamoto J."/>
            <person name="Saito K."/>
            <person name="Kawai Y."/>
            <person name="Isono Y."/>
            <person name="Nakamura Y."/>
            <person name="Nagahari K."/>
            <person name="Murakami K."/>
            <person name="Yasuda T."/>
            <person name="Iwayanagi T."/>
            <person name="Wagatsuma M."/>
            <person name="Shiratori A."/>
            <person name="Sudo H."/>
            <person name="Hosoiri T."/>
            <person name="Kaku Y."/>
            <person name="Kodaira H."/>
            <person name="Kondo H."/>
            <person name="Sugawara M."/>
            <person name="Takahashi M."/>
            <person name="Kanda K."/>
            <person name="Yokoi T."/>
            <person name="Furuya T."/>
            <person name="Kikkawa E."/>
            <person name="Omura Y."/>
            <person name="Abe K."/>
            <person name="Kamihara K."/>
            <person name="Katsuta N."/>
            <person name="Sato K."/>
            <person name="Tanikawa M."/>
            <person name="Yamazaki M."/>
            <person name="Ninomiya K."/>
            <person name="Ishibashi T."/>
            <person name="Yamashita H."/>
            <person name="Murakawa K."/>
            <person name="Fujimori K."/>
            <person name="Tanai H."/>
            <person name="Kimata M."/>
            <person name="Watanabe M."/>
            <person name="Hiraoka S."/>
            <person name="Chiba Y."/>
            <person name="Ishida S."/>
            <person name="Ono Y."/>
            <person name="Takiguchi S."/>
            <person name="Watanabe S."/>
            <person name="Yosida M."/>
            <person name="Hotuta T."/>
            <person name="Kusano J."/>
            <person name="Kanehori K."/>
            <person name="Takahashi-Fujii A."/>
            <person name="Hara H."/>
            <person name="Tanase T.-O."/>
            <person name="Nomura Y."/>
            <person name="Togiya S."/>
            <person name="Komai F."/>
            <person name="Hara R."/>
            <person name="Takeuchi K."/>
            <person name="Arita M."/>
            <person name="Imose N."/>
            <person name="Musashino K."/>
            <person name="Yuuki H."/>
            <person name="Oshima A."/>
            <person name="Sasaki N."/>
            <person name="Aotsuka S."/>
            <person name="Yoshikawa Y."/>
            <person name="Matsunawa H."/>
            <person name="Ichihara T."/>
            <person name="Shiohata N."/>
            <person name="Sano S."/>
            <person name="Moriya S."/>
            <person name="Momiyama H."/>
            <person name="Satoh N."/>
            <person name="Takami S."/>
            <person name="Terashima Y."/>
            <person name="Suzuki O."/>
            <person name="Nakagawa S."/>
            <person name="Senoh A."/>
            <person name="Mizoguchi H."/>
            <person name="Goto Y."/>
            <person name="Shimizu F."/>
            <person name="Wakebe H."/>
            <person name="Hishigaki H."/>
            <person name="Watanabe T."/>
            <person name="Sugiyama A."/>
            <person name="Takemoto M."/>
            <person name="Kawakami B."/>
            <person name="Yamazaki M."/>
            <person name="Watanabe K."/>
            <person name="Kumagai A."/>
            <person name="Itakura S."/>
            <person name="Fukuzumi Y."/>
            <person name="Fujimori Y."/>
            <person name="Komiyama M."/>
            <person name="Tashiro H."/>
            <person name="Tanigami A."/>
            <person name="Fujiwara T."/>
            <person name="Ono T."/>
            <person name="Yamada K."/>
            <person name="Fujii Y."/>
            <person name="Ozaki K."/>
            <person name="Hirao M."/>
            <person name="Ohmori Y."/>
            <person name="Kawabata A."/>
            <person name="Hikiji T."/>
            <person name="Kobatake N."/>
            <person name="Inagaki H."/>
            <person name="Ikema Y."/>
            <person name="Okamoto S."/>
            <person name="Okitani R."/>
            <person name="Kawakami T."/>
            <person name="Noguchi S."/>
            <person name="Itoh T."/>
            <person name="Shigeta K."/>
            <person name="Senba T."/>
            <person name="Matsumura K."/>
            <person name="Nakajima Y."/>
            <person name="Mizuno T."/>
            <person name="Morinaga M."/>
            <person name="Sasaki M."/>
            <person name="Togashi T."/>
            <person name="Oyama M."/>
            <person name="Hata H."/>
            <person name="Watanabe M."/>
            <person name="Komatsu T."/>
            <person name="Mizushima-Sugano J."/>
            <person name="Satoh T."/>
            <person name="Shirai Y."/>
            <person name="Takahashi Y."/>
            <person name="Nakagawa K."/>
            <person name="Okumura K."/>
            <person name="Nagase T."/>
            <person name="Nomura N."/>
            <person name="Kikuchi H."/>
            <person name="Masuho Y."/>
            <person name="Yamashita R."/>
            <person name="Nakai K."/>
            <person name="Yada T."/>
            <person name="Nakamura Y."/>
            <person name="Ohara O."/>
            <person name="Isogai T."/>
            <person name="Sugano S."/>
        </authorList>
    </citation>
    <scope>NUCLEOTIDE SEQUENCE [LARGE SCALE MRNA]</scope>
    <source>
        <tissue>Placenta</tissue>
    </source>
</reference>
<reference key="2">
    <citation type="submission" date="2005-04" db="EMBL/GenBank/DDBJ databases">
        <authorList>
            <person name="Suzuki Y."/>
            <person name="Sugano S."/>
            <person name="Totoki Y."/>
            <person name="Toyoda A."/>
            <person name="Takeda T."/>
            <person name="Sakaki Y."/>
            <person name="Tanaka A."/>
            <person name="Yokoyama S."/>
        </authorList>
    </citation>
    <scope>NUCLEOTIDE SEQUENCE [LARGE SCALE MRNA]</scope>
    <source>
        <tissue>Cerebellum</tissue>
    </source>
</reference>
<reference key="3">
    <citation type="journal article" date="2004" name="Genome Res.">
        <title>The status, quality, and expansion of the NIH full-length cDNA project: the Mammalian Gene Collection (MGC).</title>
        <authorList>
            <consortium name="The MGC Project Team"/>
        </authorList>
    </citation>
    <scope>NUCLEOTIDE SEQUENCE [LARGE SCALE MRNA]</scope>
    <scope>VARIANT MET-542</scope>
    <source>
        <tissue>Brain</tissue>
    </source>
</reference>
<reference key="4">
    <citation type="journal article" date="2009" name="Anal. Chem.">
        <title>Lys-N and trypsin cover complementary parts of the phosphoproteome in a refined SCX-based approach.</title>
        <authorList>
            <person name="Gauci S."/>
            <person name="Helbig A.O."/>
            <person name="Slijper M."/>
            <person name="Krijgsveld J."/>
            <person name="Heck A.J."/>
            <person name="Mohammed S."/>
        </authorList>
    </citation>
    <scope>ACETYLATION [LARGE SCALE ANALYSIS] AT ALA-2</scope>
    <scope>CLEAVAGE OF INITIATOR METHIONINE [LARGE SCALE ANALYSIS]</scope>
    <scope>IDENTIFICATION BY MASS SPECTROMETRY [LARGE SCALE ANALYSIS]</scope>
</reference>
<reference key="5">
    <citation type="journal article" date="2023" name="Am. J. Physiol.">
        <title>Altered contractility, Ca2+ transients, and cell morphology seen in a patient-specific iPSC-CM model of Ebstein's anomaly with left ventricular noncompaction.</title>
        <authorList>
            <person name="Thareja S.K."/>
            <person name="Anfinson M."/>
            <person name="Cavanaugh M."/>
            <person name="Kim M.S."/>
            <person name="Lamberton P."/>
            <person name="Radandt J."/>
            <person name="Brown R."/>
            <person name="Liang H.L."/>
            <person name="Stamm K."/>
            <person name="Afzal M.Z."/>
            <person name="Strande J."/>
            <person name="Frommelt M.A."/>
            <person name="Lough J.W."/>
            <person name="Fitts R.H."/>
            <person name="Mitchell M.E."/>
            <person name="Tomita-Mitchell A."/>
        </authorList>
    </citation>
    <scope>FUNCTION</scope>
</reference>
<reference key="6">
    <citation type="journal article" date="2020" name="Mol. Genet. Genomic Med.">
        <title>Novel KLHL26 variant associated with a familial case of Ebstein's anomaly and left ventricular noncompaction.</title>
        <authorList>
            <person name="Samudrala S.S.K."/>
            <person name="North L.M."/>
            <person name="Stamm K.D."/>
            <person name="Earing M.G."/>
            <person name="Frommelt M.A."/>
            <person name="Willes R."/>
            <person name="Tripathi S."/>
            <person name="Dsouza N.R."/>
            <person name="Zimmermann M.T."/>
            <person name="Mahnke D.K."/>
            <person name="Liang H.L."/>
            <person name="Lund M."/>
            <person name="Lin C.W."/>
            <person name="Geddes G.C."/>
            <person name="Mitchell M.E."/>
            <person name="Tomita-Mitchell A."/>
        </authorList>
    </citation>
    <scope>INVOLVEMENT IN EBSTEIN'S ANOMALY</scope>
    <scope>VARIANT EBSTEIN'S ANOMALY CYS-208</scope>
</reference>
<protein>
    <recommendedName>
        <fullName>Kelch-like protein 26</fullName>
    </recommendedName>
</protein>
<sequence length="615" mass="68139">MAESGGSSGGAGGGGAFGAGPGPERPNSTADKNGALKCTFSAPSHSTSLLQGLATLRAQGQLLDVVLTINREAFPAHKVVLAACSDYFRAMFTGGMREASQDVIELKGVSARGLRHIIDFAYSAEVTLDLDCVQDVLGAAVFLQMLPVVELCEEFLKAAMSVETCLNIGQMATTFSLASLRESVDAFTFRHFLQIAEEEDFLRLPLERLVFFLQSNRLQSCAEIDLFRAAVRWLQHDPARRPRASHVLCHIRFPLMQSSELVDSVQTLDIMVEDVLCRQYLLEAFNYQVLPFRQHEMQSPRTAVRSDVPSLVTFGGTPYTDSDRSVSSKVYQLPEPGARHFRELTEMEVGCSHTCVAVLDNFVYVAGGQHLQYRSGEGAVDACYRYDPHLNRWLRLQAMQESRIQFQLNVLCGMVYATGGRNRAGSLASVERYCPRRNEWGYACSLKRRTWGHAGAASGGRLYISGGYGISVEDKKALHCYDPVADQWEFKAPMSEPRVLHAMVGAGGRIYALGGRMDHVDRCFDVLAVEYYVPETDQWTSVSPMRAGQSEAGCCLLERKIYIVGGYNWRLNNVTGIVQVYNTDTDEWERDLHFPESFAGIACAPVLLPRAGTRR</sequence>
<proteinExistence type="evidence at protein level"/>
<dbReference type="EMBL" id="AK001940">
    <property type="protein sequence ID" value="BAA91990.1"/>
    <property type="molecule type" value="mRNA"/>
</dbReference>
<dbReference type="EMBL" id="AK222656">
    <property type="protein sequence ID" value="BAD96376.1"/>
    <property type="molecule type" value="mRNA"/>
</dbReference>
<dbReference type="EMBL" id="BC026319">
    <property type="protein sequence ID" value="AAH26319.1"/>
    <property type="molecule type" value="mRNA"/>
</dbReference>
<dbReference type="CCDS" id="CCDS12384.1"/>
<dbReference type="RefSeq" id="NP_060786.1">
    <property type="nucleotide sequence ID" value="NM_018316.3"/>
</dbReference>
<dbReference type="PDB" id="9ETW">
    <property type="method" value="X-ray"/>
    <property type="resolution" value="1.51 A"/>
    <property type="chains" value="A/B=34-161"/>
</dbReference>
<dbReference type="PDBsum" id="9ETW"/>
<dbReference type="SMR" id="Q53HC5"/>
<dbReference type="BioGRID" id="120582">
    <property type="interactions" value="123"/>
</dbReference>
<dbReference type="ComplexPortal" id="CPX-8130">
    <property type="entry name" value="CRL3 E3 ubiquitin ligase complex, KLHL26 variant"/>
</dbReference>
<dbReference type="FunCoup" id="Q53HC5">
    <property type="interactions" value="113"/>
</dbReference>
<dbReference type="IntAct" id="Q53HC5">
    <property type="interactions" value="80"/>
</dbReference>
<dbReference type="MINT" id="Q53HC5"/>
<dbReference type="STRING" id="9606.ENSP00000300976"/>
<dbReference type="iPTMnet" id="Q53HC5"/>
<dbReference type="PhosphoSitePlus" id="Q53HC5"/>
<dbReference type="BioMuta" id="KLHL26"/>
<dbReference type="DMDM" id="109892505"/>
<dbReference type="jPOST" id="Q53HC5"/>
<dbReference type="MassIVE" id="Q53HC5"/>
<dbReference type="PaxDb" id="9606-ENSP00000300976"/>
<dbReference type="PeptideAtlas" id="Q53HC5"/>
<dbReference type="ProteomicsDB" id="62504"/>
<dbReference type="Pumba" id="Q53HC5"/>
<dbReference type="Antibodypedia" id="15139">
    <property type="antibodies" value="122 antibodies from 23 providers"/>
</dbReference>
<dbReference type="DNASU" id="55295"/>
<dbReference type="Ensembl" id="ENST00000300976.9">
    <property type="protein sequence ID" value="ENSP00000300976.3"/>
    <property type="gene ID" value="ENSG00000167487.12"/>
</dbReference>
<dbReference type="GeneID" id="55295"/>
<dbReference type="KEGG" id="hsa:55295"/>
<dbReference type="MANE-Select" id="ENST00000300976.9">
    <property type="protein sequence ID" value="ENSP00000300976.3"/>
    <property type="RefSeq nucleotide sequence ID" value="NM_018316.3"/>
    <property type="RefSeq protein sequence ID" value="NP_060786.1"/>
</dbReference>
<dbReference type="UCSC" id="uc002njz.2">
    <property type="organism name" value="human"/>
</dbReference>
<dbReference type="AGR" id="HGNC:25623"/>
<dbReference type="CTD" id="55295"/>
<dbReference type="DisGeNET" id="55295"/>
<dbReference type="GeneCards" id="KLHL26"/>
<dbReference type="HGNC" id="HGNC:25623">
    <property type="gene designation" value="KLHL26"/>
</dbReference>
<dbReference type="HPA" id="ENSG00000167487">
    <property type="expression patterns" value="Low tissue specificity"/>
</dbReference>
<dbReference type="neXtProt" id="NX_Q53HC5"/>
<dbReference type="OpenTargets" id="ENSG00000167487"/>
<dbReference type="PharmGKB" id="PA143485524"/>
<dbReference type="VEuPathDB" id="HostDB:ENSG00000167487"/>
<dbReference type="eggNOG" id="KOG4441">
    <property type="taxonomic scope" value="Eukaryota"/>
</dbReference>
<dbReference type="GeneTree" id="ENSGT00940000159238"/>
<dbReference type="HOGENOM" id="CLU_004253_14_3_1"/>
<dbReference type="InParanoid" id="Q53HC5"/>
<dbReference type="OMA" id="INREAFH"/>
<dbReference type="OrthoDB" id="45365at2759"/>
<dbReference type="PAN-GO" id="Q53HC5">
    <property type="GO annotations" value="0 GO annotations based on evolutionary models"/>
</dbReference>
<dbReference type="PhylomeDB" id="Q53HC5"/>
<dbReference type="TreeFam" id="TF328485"/>
<dbReference type="PathwayCommons" id="Q53HC5"/>
<dbReference type="SignaLink" id="Q53HC5"/>
<dbReference type="BioGRID-ORCS" id="55295">
    <property type="hits" value="15 hits in 1191 CRISPR screens"/>
</dbReference>
<dbReference type="ChiTaRS" id="KLHL26">
    <property type="organism name" value="human"/>
</dbReference>
<dbReference type="GenomeRNAi" id="55295"/>
<dbReference type="Pharos" id="Q53HC5">
    <property type="development level" value="Tdark"/>
</dbReference>
<dbReference type="PRO" id="PR:Q53HC5"/>
<dbReference type="Proteomes" id="UP000005640">
    <property type="component" value="Chromosome 19"/>
</dbReference>
<dbReference type="RNAct" id="Q53HC5">
    <property type="molecule type" value="protein"/>
</dbReference>
<dbReference type="Bgee" id="ENSG00000167487">
    <property type="expression patterns" value="Expressed in secondary oocyte and 133 other cell types or tissues"/>
</dbReference>
<dbReference type="ExpressionAtlas" id="Q53HC5">
    <property type="expression patterns" value="baseline and differential"/>
</dbReference>
<dbReference type="CDD" id="cd18465">
    <property type="entry name" value="BACK_KLHL26"/>
    <property type="match status" value="1"/>
</dbReference>
<dbReference type="CDD" id="cd18255">
    <property type="entry name" value="BTB_POZ_KLHL26"/>
    <property type="match status" value="1"/>
</dbReference>
<dbReference type="Gene3D" id="1.25.40.420">
    <property type="match status" value="1"/>
</dbReference>
<dbReference type="Gene3D" id="2.120.10.80">
    <property type="entry name" value="Kelch-type beta propeller"/>
    <property type="match status" value="1"/>
</dbReference>
<dbReference type="Gene3D" id="3.30.710.10">
    <property type="entry name" value="Potassium Channel Kv1.1, Chain A"/>
    <property type="match status" value="1"/>
</dbReference>
<dbReference type="InterPro" id="IPR011705">
    <property type="entry name" value="BACK"/>
</dbReference>
<dbReference type="InterPro" id="IPR017096">
    <property type="entry name" value="BTB-kelch_protein"/>
</dbReference>
<dbReference type="InterPro" id="IPR000210">
    <property type="entry name" value="BTB/POZ_dom"/>
</dbReference>
<dbReference type="InterPro" id="IPR030588">
    <property type="entry name" value="BTB_POZ_KLHL26"/>
</dbReference>
<dbReference type="InterPro" id="IPR015915">
    <property type="entry name" value="Kelch-typ_b-propeller"/>
</dbReference>
<dbReference type="InterPro" id="IPR006652">
    <property type="entry name" value="Kelch_1"/>
</dbReference>
<dbReference type="InterPro" id="IPR011333">
    <property type="entry name" value="SKP1/BTB/POZ_sf"/>
</dbReference>
<dbReference type="PANTHER" id="PTHR45632:SF13">
    <property type="entry name" value="KELCH-LIKE PROTEIN 26"/>
    <property type="match status" value="1"/>
</dbReference>
<dbReference type="PANTHER" id="PTHR45632">
    <property type="entry name" value="LD33804P"/>
    <property type="match status" value="1"/>
</dbReference>
<dbReference type="Pfam" id="PF07707">
    <property type="entry name" value="BACK"/>
    <property type="match status" value="1"/>
</dbReference>
<dbReference type="Pfam" id="PF00651">
    <property type="entry name" value="BTB"/>
    <property type="match status" value="1"/>
</dbReference>
<dbReference type="Pfam" id="PF01344">
    <property type="entry name" value="Kelch_1"/>
    <property type="match status" value="4"/>
</dbReference>
<dbReference type="Pfam" id="PF13964">
    <property type="entry name" value="Kelch_6"/>
    <property type="match status" value="1"/>
</dbReference>
<dbReference type="PIRSF" id="PIRSF037037">
    <property type="entry name" value="Kelch-like_protein_gigaxonin"/>
    <property type="match status" value="1"/>
</dbReference>
<dbReference type="SMART" id="SM00875">
    <property type="entry name" value="BACK"/>
    <property type="match status" value="1"/>
</dbReference>
<dbReference type="SMART" id="SM00225">
    <property type="entry name" value="BTB"/>
    <property type="match status" value="1"/>
</dbReference>
<dbReference type="SMART" id="SM00612">
    <property type="entry name" value="Kelch"/>
    <property type="match status" value="6"/>
</dbReference>
<dbReference type="SUPFAM" id="SSF117281">
    <property type="entry name" value="Kelch motif"/>
    <property type="match status" value="1"/>
</dbReference>
<dbReference type="SUPFAM" id="SSF54695">
    <property type="entry name" value="POZ domain"/>
    <property type="match status" value="1"/>
</dbReference>
<dbReference type="PROSITE" id="PS50097">
    <property type="entry name" value="BTB"/>
    <property type="match status" value="1"/>
</dbReference>
<gene>
    <name type="primary">KLHL26</name>
</gene>
<keyword id="KW-0002">3D-structure</keyword>
<keyword id="KW-0007">Acetylation</keyword>
<keyword id="KW-0880">Kelch repeat</keyword>
<keyword id="KW-1267">Proteomics identification</keyword>
<keyword id="KW-1185">Reference proteome</keyword>
<keyword id="KW-0677">Repeat</keyword>
<accession>Q53HC5</accession>
<accession>Q8TAP0</accession>
<accession>Q9NUX3</accession>
<comment type="function">
    <text evidence="6">May play a role in endo(sarco)plasmic reticulum (ER/SR) mitochondrial signaling (PubMed:37204873). May be part of the ubiquitin-proteasome system (UPS) and affect ubiquitination and degradation of target substrates in cardiomyocytes (PubMed:37204873).</text>
</comment>
<comment type="interaction">
    <interactant intactId="EBI-724915">
        <id>Q53HC5</id>
    </interactant>
    <interactant intactId="EBI-11954519">
        <id>Q49AR9</id>
        <label>ANKS1A</label>
    </interactant>
    <organismsDiffer>false</organismsDiffer>
    <experiments>3</experiments>
</comment>
<comment type="interaction">
    <interactant intactId="EBI-724915">
        <id>Q53HC5</id>
    </interactant>
    <interactant intactId="EBI-745213">
        <id>P29972</id>
        <label>AQP1</label>
    </interactant>
    <organismsDiffer>false</organismsDiffer>
    <experiments>3</experiments>
</comment>
<comment type="interaction">
    <interactant intactId="EBI-724915">
        <id>Q53HC5</id>
    </interactant>
    <interactant intactId="EBI-744099">
        <id>Q9H0I2</id>
        <label>ENKD1</label>
    </interactant>
    <organismsDiffer>false</organismsDiffer>
    <experiments>3</experiments>
</comment>
<comment type="interaction">
    <interactant intactId="EBI-724915">
        <id>Q53HC5</id>
    </interactant>
    <interactant intactId="EBI-1759806">
        <id>O75593</id>
        <label>FOXH1</label>
    </interactant>
    <organismsDiffer>false</organismsDiffer>
    <experiments>3</experiments>
</comment>
<comment type="interaction">
    <interactant intactId="EBI-724915">
        <id>Q53HC5</id>
    </interactant>
    <interactant intactId="EBI-6509505">
        <id>Q0VD86</id>
        <label>INCA1</label>
    </interactant>
    <organismsDiffer>false</organismsDiffer>
    <experiments>3</experiments>
</comment>
<comment type="interaction">
    <interactant intactId="EBI-724915">
        <id>Q53HC5</id>
    </interactant>
    <interactant intactId="EBI-4397613">
        <id>Q7L273</id>
        <label>KCTD9</label>
    </interactant>
    <organismsDiffer>false</organismsDiffer>
    <experiments>3</experiments>
</comment>
<comment type="interaction">
    <interactant intactId="EBI-724915">
        <id>Q53HC5</id>
    </interactant>
    <interactant intactId="EBI-744342">
        <id>Q8IVD9</id>
        <label>NUDCD3</label>
    </interactant>
    <organismsDiffer>false</organismsDiffer>
    <experiments>3</experiments>
</comment>
<comment type="interaction">
    <interactant intactId="EBI-724915">
        <id>Q53HC5</id>
    </interactant>
    <interactant intactId="EBI-10297093">
        <id>Q9BRQ3</id>
        <label>NUDT22</label>
    </interactant>
    <organismsDiffer>false</organismsDiffer>
    <experiments>3</experiments>
</comment>
<comment type="interaction">
    <interactant intactId="EBI-724915">
        <id>Q53HC5</id>
    </interactant>
    <interactant intactId="EBI-740446">
        <id>P32242</id>
        <label>OTX1</label>
    </interactant>
    <organismsDiffer>false</organismsDiffer>
    <experiments>3</experiments>
</comment>
<comment type="interaction">
    <interactant intactId="EBI-724915">
        <id>Q53HC5</id>
    </interactant>
    <interactant intactId="EBI-748265">
        <id>P78337</id>
        <label>PITX1</label>
    </interactant>
    <organismsDiffer>false</organismsDiffer>
    <experiments>3</experiments>
</comment>
<comment type="interaction">
    <interactant intactId="EBI-724915">
        <id>Q53HC5</id>
    </interactant>
    <interactant intactId="EBI-1389308">
        <id>Q7Z3K3</id>
        <label>POGZ</label>
    </interactant>
    <organismsDiffer>false</organismsDiffer>
    <experiments>3</experiments>
</comment>
<comment type="interaction">
    <interactant intactId="EBI-724915">
        <id>Q53HC5</id>
    </interactant>
    <interactant intactId="EBI-11986293">
        <id>P0CG20</id>
        <label>PRR35</label>
    </interactant>
    <organismsDiffer>false</organismsDiffer>
    <experiments>3</experiments>
</comment>
<comment type="interaction">
    <interactant intactId="EBI-724915">
        <id>Q53HC5</id>
    </interactant>
    <interactant intactId="EBI-372899">
        <id>Q13148</id>
        <label>TARDBP</label>
    </interactant>
    <organismsDiffer>false</organismsDiffer>
    <experiments>3</experiments>
</comment>
<comment type="interaction">
    <interactant intactId="EBI-724915">
        <id>Q53HC5</id>
    </interactant>
    <interactant intactId="EBI-11963196">
        <id>Q15915</id>
        <label>ZIC1</label>
    </interactant>
    <organismsDiffer>false</organismsDiffer>
    <experiments>3</experiments>
</comment>
<comment type="disease">
    <text evidence="5">Defects in KLHL26 may be cause of autosomal dominant inheritance of Ebstein's anomaly and left ventricular non-compaction.</text>
</comment>
<organism>
    <name type="scientific">Homo sapiens</name>
    <name type="common">Human</name>
    <dbReference type="NCBI Taxonomy" id="9606"/>
    <lineage>
        <taxon>Eukaryota</taxon>
        <taxon>Metazoa</taxon>
        <taxon>Chordata</taxon>
        <taxon>Craniata</taxon>
        <taxon>Vertebrata</taxon>
        <taxon>Euteleostomi</taxon>
        <taxon>Mammalia</taxon>
        <taxon>Eutheria</taxon>
        <taxon>Euarchontoglires</taxon>
        <taxon>Primates</taxon>
        <taxon>Haplorrhini</taxon>
        <taxon>Catarrhini</taxon>
        <taxon>Hominidae</taxon>
        <taxon>Homo</taxon>
    </lineage>
</organism>
<name>KLH26_HUMAN</name>
<evidence type="ECO:0000255" key="1"/>
<evidence type="ECO:0000255" key="2">
    <source>
        <dbReference type="PROSITE-ProRule" id="PRU00037"/>
    </source>
</evidence>
<evidence type="ECO:0000256" key="3">
    <source>
        <dbReference type="SAM" id="MobiDB-lite"/>
    </source>
</evidence>
<evidence type="ECO:0000269" key="4">
    <source>
    </source>
</evidence>
<evidence type="ECO:0000269" key="5">
    <source>
    </source>
</evidence>
<evidence type="ECO:0000269" key="6">
    <source>
    </source>
</evidence>
<evidence type="ECO:0000305" key="7"/>
<evidence type="ECO:0007744" key="8">
    <source>
    </source>
</evidence>
<evidence type="ECO:0007829" key="9">
    <source>
        <dbReference type="PDB" id="9ETW"/>
    </source>
</evidence>
<feature type="initiator methionine" description="Removed" evidence="8">
    <location>
        <position position="1"/>
    </location>
</feature>
<feature type="chain" id="PRO_0000242688" description="Kelch-like protein 26">
    <location>
        <begin position="2"/>
        <end position="615"/>
    </location>
</feature>
<feature type="domain" description="BTB" evidence="2">
    <location>
        <begin position="63"/>
        <end position="130"/>
    </location>
</feature>
<feature type="domain" description="BACK" evidence="1">
    <location>
        <begin position="165"/>
        <end position="266"/>
    </location>
</feature>
<feature type="repeat" description="Kelch 1" evidence="1">
    <location>
        <begin position="310"/>
        <end position="361"/>
    </location>
</feature>
<feature type="repeat" description="Kelch 2" evidence="1">
    <location>
        <begin position="362"/>
        <end position="413"/>
    </location>
</feature>
<feature type="repeat" description="Kelch 3" evidence="1">
    <location>
        <begin position="414"/>
        <end position="460"/>
    </location>
</feature>
<feature type="repeat" description="Kelch 4" evidence="1">
    <location>
        <begin position="461"/>
        <end position="508"/>
    </location>
</feature>
<feature type="repeat" description="Kelch 5" evidence="1">
    <location>
        <begin position="510"/>
        <end position="559"/>
    </location>
</feature>
<feature type="repeat" description="Kelch 6" evidence="1">
    <location>
        <begin position="561"/>
        <end position="608"/>
    </location>
</feature>
<feature type="region of interest" description="Disordered" evidence="3">
    <location>
        <begin position="1"/>
        <end position="35"/>
    </location>
</feature>
<feature type="compositionally biased region" description="Gly residues" evidence="3">
    <location>
        <begin position="1"/>
        <end position="21"/>
    </location>
</feature>
<feature type="modified residue" description="N-acetylalanine" evidence="8">
    <location>
        <position position="2"/>
    </location>
</feature>
<feature type="sequence variant" id="VAR_088489" description="Found in patients with Ebstein's anomaly and left ventricular non-compaction; uncertain significance; dbSNP:rs200171150." evidence="5">
    <original>R</original>
    <variation>C</variation>
    <location>
        <position position="208"/>
    </location>
</feature>
<feature type="sequence variant" id="VAR_026861" description="In dbSNP:rs17852384." evidence="4">
    <original>V</original>
    <variation>M</variation>
    <location>
        <position position="542"/>
    </location>
</feature>
<feature type="sequence conflict" description="In Ref. 2; BAD96376." evidence="7" ref="2">
    <original>D</original>
    <variation>G</variation>
    <location>
        <position position="521"/>
    </location>
</feature>
<feature type="strand" evidence="9">
    <location>
        <begin position="38"/>
        <end position="41"/>
    </location>
</feature>
<feature type="helix" evidence="9">
    <location>
        <begin position="45"/>
        <end position="58"/>
    </location>
</feature>
<feature type="strand" evidence="9">
    <location>
        <begin position="65"/>
        <end position="69"/>
    </location>
</feature>
<feature type="strand" evidence="9">
    <location>
        <begin position="72"/>
        <end position="76"/>
    </location>
</feature>
<feature type="helix" evidence="9">
    <location>
        <begin position="78"/>
        <end position="84"/>
    </location>
</feature>
<feature type="helix" evidence="9">
    <location>
        <begin position="86"/>
        <end position="93"/>
    </location>
</feature>
<feature type="strand" evidence="9">
    <location>
        <begin position="94"/>
        <end position="96"/>
    </location>
</feature>
<feature type="helix" evidence="9">
    <location>
        <begin position="97"/>
        <end position="100"/>
    </location>
</feature>
<feature type="strand" evidence="9">
    <location>
        <begin position="102"/>
        <end position="105"/>
    </location>
</feature>
<feature type="helix" evidence="9">
    <location>
        <begin position="111"/>
        <end position="123"/>
    </location>
</feature>
<feature type="strand" evidence="9">
    <location>
        <begin position="124"/>
        <end position="128"/>
    </location>
</feature>
<feature type="turn" evidence="9">
    <location>
        <begin position="130"/>
        <end position="132"/>
    </location>
</feature>
<feature type="helix" evidence="9">
    <location>
        <begin position="133"/>
        <end position="142"/>
    </location>
</feature>
<feature type="helix" evidence="9">
    <location>
        <begin position="146"/>
        <end position="159"/>
    </location>
</feature>